<keyword id="KW-0002">3D-structure</keyword>
<keyword id="KW-0007">Acetylation</keyword>
<keyword id="KW-0106">Calcium</keyword>
<keyword id="KW-0130">Cell adhesion</keyword>
<keyword id="KW-0963">Cytoplasm</keyword>
<keyword id="KW-0903">Direct protein sequencing</keyword>
<keyword id="KW-0479">Metal-binding</keyword>
<keyword id="KW-0539">Nucleus</keyword>
<keyword id="KW-1185">Reference proteome</keyword>
<keyword id="KW-0677">Repeat</keyword>
<keyword id="KW-0964">Secreted</keyword>
<keyword id="KW-0862">Zinc</keyword>
<comment type="function">
    <text evidence="1 2 3 5 6 8">Small zinc- and- and calcium-binding protein that is highly expressed in astrocytes and constitutes one of the most abundant soluble proteins in brain (PubMed:3722149, PubMed:6615778). Weakly binds calcium but binds zinc very tightly-distinct binding sites with different affinities exist for both ions on each monomer (PubMed:3722149, PubMed:6615778). Physiological concentrations of potassium ion antagonize the binding of both divalent cations, especially affecting high-affinity calcium-binding sites (PubMed:3722149). Acts as a neurotrophic factor that promotes astrocytosis and axonal proliferation (By similarity). Involved in innervation of thermogenic adipose tissue by acting as an adipocyte-derived neurotrophic factor that promotes sympathetic innervation of adipose tissue (By similarity). Binds to and initiates the activation of STK38 by releasing autoinhibitory intramolecular interactions within the kinase (PubMed:14661952). Interaction with AGER after myocardial infarction may play a role in myocyte apoptosis by activating ERK1/2 and p53/TP53 signaling (By similarity). Could assist ATAD3A cytoplasmic processing, preventing aggregation and favoring mitochondrial localization (By similarity). May mediate calcium-dependent regulation on many physiological processes by interacting with other proteins, such as TPR-containing proteins, and modulating their activity (By similarity).</text>
</comment>
<comment type="subunit">
    <text evidence="1 2 3 5">Dimer of either two alpha chains, or two beta chains, or one alpha and one beta chain (PubMed:14661952). The S100B dimer binds two molecules of STK38 (PubMed:14661952). Interacts with CACYBP in a calcium-dependent manner (By similarity). Interacts with ATAD3A; this interaction probably occurs in the cytosol prior to ATAD3A mitochondrial targeting (By similarity). Interacts with S100A6 (By similarity). The S100B dimer interacts with two molecules of CAPZA1 (By similarity). Interacts with AGER (By similarity). Interacts with PPP5C (via TPR repeats); the interaction is calcium-dependent and modulates PPP5C activity (By similarity). Interacts with TPPP; this interaction inhibits TPPP dimerization (By similarity). Interacts with isoform CLSTN3beta of CLSTN3; interaction promotes secretion (By similarity).</text>
</comment>
<comment type="interaction">
    <interactant intactId="EBI-458452">
        <id>P02638</id>
    </interactant>
    <interactant intactId="EBI-767146">
        <id>Q9CXW3</id>
        <label>Cacybp</label>
    </interactant>
    <organismsDiffer>true</organismsDiffer>
    <experiments>4</experiments>
</comment>
<comment type="interaction">
    <interactant intactId="EBI-458452">
        <id>P02638</id>
    </interactant>
    <interactant intactId="EBI-9836801">
        <id>O95259-2</id>
        <label>KCNH1</label>
    </interactant>
    <organismsDiffer>true</organismsDiffer>
    <experiments>2</experiments>
</comment>
<comment type="interaction">
    <interactant intactId="EBI-458452">
        <id>P02638</id>
    </interactant>
    <interactant intactId="EBI-458376">
        <id>Q15208</id>
        <label>STK38</label>
    </interactant>
    <organismsDiffer>true</organismsDiffer>
    <experiments>3</experiments>
</comment>
<comment type="subcellular location">
    <subcellularLocation>
        <location evidence="1">Cytoplasm</location>
    </subcellularLocation>
    <subcellularLocation>
        <location evidence="1">Nucleus</location>
    </subcellularLocation>
    <subcellularLocation>
        <location evidence="3">Secreted</location>
    </subcellularLocation>
    <text evidence="3">Secretion into the medium is promoted by interaction with isoform CLSTN3beta of CLSTN3.</text>
</comment>
<comment type="similarity">
    <text evidence="10">Belongs to the S-100 family.</text>
</comment>
<sequence length="92" mass="10668">MSELEKAVVALIDVFHQYSGREGDKHKLKKSELKELINNELSHFLEEIKEQEVVDKVMETLDSDGDGECDFQEFMAFVAMITTACHEFFEHE</sequence>
<proteinExistence type="evidence at protein level"/>
<protein>
    <recommendedName>
        <fullName>Protein S100-B</fullName>
    </recommendedName>
    <alternativeName>
        <fullName>S-100 protein beta chain</fullName>
    </alternativeName>
    <alternativeName>
        <fullName>S-100 protein subunit beta</fullName>
    </alternativeName>
    <alternativeName>
        <fullName>S100 calcium-binding protein B</fullName>
    </alternativeName>
</protein>
<dbReference type="EMBL" id="DQ195377">
    <property type="protein sequence ID" value="ABA39829.1"/>
    <property type="molecule type" value="mRNA"/>
</dbReference>
<dbReference type="EMBL" id="BC103041">
    <property type="protein sequence ID" value="AAI03042.1"/>
    <property type="molecule type" value="mRNA"/>
</dbReference>
<dbReference type="EMBL" id="BC134727">
    <property type="protein sequence ID" value="AAI34728.1"/>
    <property type="molecule type" value="mRNA"/>
</dbReference>
<dbReference type="PIR" id="A91254">
    <property type="entry name" value="BCBOIB"/>
</dbReference>
<dbReference type="RefSeq" id="NP_001029727.1">
    <property type="nucleotide sequence ID" value="NM_001034555.3"/>
</dbReference>
<dbReference type="PDB" id="1CFP">
    <property type="method" value="NMR"/>
    <property type="chains" value="A/B=1-92"/>
</dbReference>
<dbReference type="PDB" id="1MHO">
    <property type="method" value="X-ray"/>
    <property type="resolution" value="2.00 A"/>
    <property type="chains" value="A=2-89"/>
</dbReference>
<dbReference type="PDB" id="1PSB">
    <property type="method" value="NMR"/>
    <property type="chains" value="A/B=2-92"/>
</dbReference>
<dbReference type="PDB" id="3CR2">
    <property type="method" value="X-ray"/>
    <property type="resolution" value="1.88 A"/>
    <property type="chains" value="A=1-92"/>
</dbReference>
<dbReference type="PDB" id="3CR4">
    <property type="method" value="X-ray"/>
    <property type="resolution" value="2.15 A"/>
    <property type="chains" value="X=1-92"/>
</dbReference>
<dbReference type="PDB" id="3CR5">
    <property type="method" value="X-ray"/>
    <property type="resolution" value="1.85 A"/>
    <property type="chains" value="X=1-92"/>
</dbReference>
<dbReference type="PDB" id="3GK1">
    <property type="method" value="X-ray"/>
    <property type="resolution" value="2.10 A"/>
    <property type="chains" value="A=1-92"/>
</dbReference>
<dbReference type="PDB" id="3GK2">
    <property type="method" value="X-ray"/>
    <property type="resolution" value="1.98 A"/>
    <property type="chains" value="A=1-92"/>
</dbReference>
<dbReference type="PDB" id="3GK4">
    <property type="method" value="X-ray"/>
    <property type="resolution" value="1.90 A"/>
    <property type="chains" value="X=1-92"/>
</dbReference>
<dbReference type="PDB" id="3IQO">
    <property type="method" value="X-ray"/>
    <property type="resolution" value="1.50 A"/>
    <property type="chains" value="A/B=1-92"/>
</dbReference>
<dbReference type="PDB" id="3IQQ">
    <property type="method" value="X-ray"/>
    <property type="resolution" value="2.01 A"/>
    <property type="chains" value="A=1-92"/>
</dbReference>
<dbReference type="PDB" id="3LK0">
    <property type="method" value="X-ray"/>
    <property type="resolution" value="2.04 A"/>
    <property type="chains" value="A/B/C/D=1-90"/>
</dbReference>
<dbReference type="PDB" id="3LK1">
    <property type="method" value="X-ray"/>
    <property type="resolution" value="1.79 A"/>
    <property type="chains" value="A=1-90"/>
</dbReference>
<dbReference type="PDB" id="3LLE">
    <property type="method" value="X-ray"/>
    <property type="resolution" value="1.85 A"/>
    <property type="chains" value="A/B=1-92"/>
</dbReference>
<dbReference type="PDB" id="3RLZ">
    <property type="method" value="X-ray"/>
    <property type="resolution" value="2.01 A"/>
    <property type="chains" value="A/B=1-92"/>
</dbReference>
<dbReference type="PDB" id="3RM1">
    <property type="method" value="X-ray"/>
    <property type="resolution" value="1.24 A"/>
    <property type="chains" value="A=1-92"/>
</dbReference>
<dbReference type="PDB" id="4FQO">
    <property type="method" value="X-ray"/>
    <property type="resolution" value="1.65 A"/>
    <property type="chains" value="A=1-89"/>
</dbReference>
<dbReference type="PDB" id="4PDZ">
    <property type="method" value="X-ray"/>
    <property type="resolution" value="1.73 A"/>
    <property type="chains" value="A/B=1-92"/>
</dbReference>
<dbReference type="PDB" id="4PE0">
    <property type="method" value="X-ray"/>
    <property type="resolution" value="1.08 A"/>
    <property type="chains" value="A/X=1-92"/>
</dbReference>
<dbReference type="PDB" id="4PE1">
    <property type="method" value="X-ray"/>
    <property type="resolution" value="1.58 A"/>
    <property type="chains" value="A/B=1-92"/>
</dbReference>
<dbReference type="PDB" id="4PE4">
    <property type="method" value="X-ray"/>
    <property type="resolution" value="2.18 A"/>
    <property type="chains" value="A/X=1-92"/>
</dbReference>
<dbReference type="PDB" id="4PE7">
    <property type="method" value="X-ray"/>
    <property type="resolution" value="1.65 A"/>
    <property type="chains" value="A=1-92"/>
</dbReference>
<dbReference type="PDB" id="5DKN">
    <property type="method" value="X-ray"/>
    <property type="resolution" value="1.53 A"/>
    <property type="chains" value="A=1-92"/>
</dbReference>
<dbReference type="PDB" id="5DKQ">
    <property type="method" value="X-ray"/>
    <property type="resolution" value="1.59 A"/>
    <property type="chains" value="A=1-92"/>
</dbReference>
<dbReference type="PDB" id="5DKR">
    <property type="method" value="X-ray"/>
    <property type="resolution" value="1.74 A"/>
    <property type="chains" value="A/B=1-92"/>
</dbReference>
<dbReference type="PDB" id="5ER4">
    <property type="method" value="X-ray"/>
    <property type="resolution" value="1.81 A"/>
    <property type="chains" value="X=1-92"/>
</dbReference>
<dbReference type="PDB" id="5ER5">
    <property type="method" value="X-ray"/>
    <property type="resolution" value="1.26 A"/>
    <property type="chains" value="A=1-92"/>
</dbReference>
<dbReference type="PDB" id="8FJ8">
    <property type="method" value="X-ray"/>
    <property type="resolution" value="2.17 A"/>
    <property type="chains" value="A=1-90"/>
</dbReference>
<dbReference type="PDBsum" id="1CFP"/>
<dbReference type="PDBsum" id="1MHO"/>
<dbReference type="PDBsum" id="1PSB"/>
<dbReference type="PDBsum" id="3CR2"/>
<dbReference type="PDBsum" id="3CR4"/>
<dbReference type="PDBsum" id="3CR5"/>
<dbReference type="PDBsum" id="3GK1"/>
<dbReference type="PDBsum" id="3GK2"/>
<dbReference type="PDBsum" id="3GK4"/>
<dbReference type="PDBsum" id="3IQO"/>
<dbReference type="PDBsum" id="3IQQ"/>
<dbReference type="PDBsum" id="3LK0"/>
<dbReference type="PDBsum" id="3LK1"/>
<dbReference type="PDBsum" id="3LLE"/>
<dbReference type="PDBsum" id="3RLZ"/>
<dbReference type="PDBsum" id="3RM1"/>
<dbReference type="PDBsum" id="4FQO"/>
<dbReference type="PDBsum" id="4PDZ"/>
<dbReference type="PDBsum" id="4PE0"/>
<dbReference type="PDBsum" id="4PE1"/>
<dbReference type="PDBsum" id="4PE4"/>
<dbReference type="PDBsum" id="4PE7"/>
<dbReference type="PDBsum" id="5DKN"/>
<dbReference type="PDBsum" id="5DKQ"/>
<dbReference type="PDBsum" id="5DKR"/>
<dbReference type="PDBsum" id="5ER4"/>
<dbReference type="PDBsum" id="5ER5"/>
<dbReference type="PDBsum" id="8FJ8"/>
<dbReference type="BMRB" id="P02638"/>
<dbReference type="SMR" id="P02638"/>
<dbReference type="BioGRID" id="182329">
    <property type="interactions" value="3"/>
</dbReference>
<dbReference type="FunCoup" id="P02638">
    <property type="interactions" value="324"/>
</dbReference>
<dbReference type="IntAct" id="P02638">
    <property type="interactions" value="3"/>
</dbReference>
<dbReference type="MINT" id="P02638"/>
<dbReference type="STRING" id="9913.ENSBTAP00000063447"/>
<dbReference type="iPTMnet" id="P02638"/>
<dbReference type="PaxDb" id="9913-ENSBTAP00000006275"/>
<dbReference type="PeptideAtlas" id="P02638"/>
<dbReference type="Ensembl" id="ENSBTAT00000086647.1">
    <property type="protein sequence ID" value="ENSBTAP00000063447.1"/>
    <property type="gene ID" value="ENSBTAG00000004777.7"/>
</dbReference>
<dbReference type="GeneID" id="525716"/>
<dbReference type="KEGG" id="bta:525716"/>
<dbReference type="CTD" id="6285"/>
<dbReference type="VEuPathDB" id="HostDB:ENSBTAG00000004777"/>
<dbReference type="VGNC" id="VGNC:34248">
    <property type="gene designation" value="S100B"/>
</dbReference>
<dbReference type="eggNOG" id="ENOG502S4HJ">
    <property type="taxonomic scope" value="Eukaryota"/>
</dbReference>
<dbReference type="GeneTree" id="ENSGT00530000064552"/>
<dbReference type="HOGENOM" id="CLU_138624_2_0_1"/>
<dbReference type="InParanoid" id="P02638"/>
<dbReference type="OMA" id="TACCHEF"/>
<dbReference type="OrthoDB" id="9903855at2759"/>
<dbReference type="TreeFam" id="TF332727"/>
<dbReference type="Reactome" id="R-BTA-445989">
    <property type="pathway name" value="TAK1-dependent IKK and NF-kappa-B activation"/>
</dbReference>
<dbReference type="Reactome" id="R-BTA-879415">
    <property type="pathway name" value="Advanced glycosylation endproduct receptor signaling"/>
</dbReference>
<dbReference type="Reactome" id="R-BTA-933542">
    <property type="pathway name" value="TRAF6 mediated NF-kB activation"/>
</dbReference>
<dbReference type="SABIO-RK" id="P02638"/>
<dbReference type="EvolutionaryTrace" id="P02638"/>
<dbReference type="PRO" id="PR:P02638"/>
<dbReference type="Proteomes" id="UP000009136">
    <property type="component" value="Chromosome 1"/>
</dbReference>
<dbReference type="Bgee" id="ENSBTAG00000004777">
    <property type="expression patterns" value="Expressed in midbrain and 102 other cell types or tissues"/>
</dbReference>
<dbReference type="GO" id="GO:0036064">
    <property type="term" value="C:ciliary basal body"/>
    <property type="evidence" value="ECO:0007669"/>
    <property type="project" value="Ensembl"/>
</dbReference>
<dbReference type="GO" id="GO:0005737">
    <property type="term" value="C:cytoplasm"/>
    <property type="evidence" value="ECO:0000314"/>
    <property type="project" value="UniProtKB"/>
</dbReference>
<dbReference type="GO" id="GO:0005829">
    <property type="term" value="C:cytosol"/>
    <property type="evidence" value="ECO:0007669"/>
    <property type="project" value="Ensembl"/>
</dbReference>
<dbReference type="GO" id="GO:0005576">
    <property type="term" value="C:extracellular region"/>
    <property type="evidence" value="ECO:0000250"/>
    <property type="project" value="UniProtKB"/>
</dbReference>
<dbReference type="GO" id="GO:0005615">
    <property type="term" value="C:extracellular space"/>
    <property type="evidence" value="ECO:0000318"/>
    <property type="project" value="GO_Central"/>
</dbReference>
<dbReference type="GO" id="GO:0043025">
    <property type="term" value="C:neuronal cell body"/>
    <property type="evidence" value="ECO:0007669"/>
    <property type="project" value="Ensembl"/>
</dbReference>
<dbReference type="GO" id="GO:0005654">
    <property type="term" value="C:nucleoplasm"/>
    <property type="evidence" value="ECO:0007669"/>
    <property type="project" value="Ensembl"/>
</dbReference>
<dbReference type="GO" id="GO:0005634">
    <property type="term" value="C:nucleus"/>
    <property type="evidence" value="ECO:0000318"/>
    <property type="project" value="GO_Central"/>
</dbReference>
<dbReference type="GO" id="GO:0048471">
    <property type="term" value="C:perinuclear region of cytoplasm"/>
    <property type="evidence" value="ECO:0007669"/>
    <property type="project" value="Ensembl"/>
</dbReference>
<dbReference type="GO" id="GO:0001726">
    <property type="term" value="C:ruffle"/>
    <property type="evidence" value="ECO:0007669"/>
    <property type="project" value="Ensembl"/>
</dbReference>
<dbReference type="GO" id="GO:0005509">
    <property type="term" value="F:calcium ion binding"/>
    <property type="evidence" value="ECO:0000314"/>
    <property type="project" value="UniProtKB"/>
</dbReference>
<dbReference type="GO" id="GO:0048306">
    <property type="term" value="F:calcium-dependent protein binding"/>
    <property type="evidence" value="ECO:0000318"/>
    <property type="project" value="GO_Central"/>
</dbReference>
<dbReference type="GO" id="GO:0019210">
    <property type="term" value="F:kinase inhibitor activity"/>
    <property type="evidence" value="ECO:0000303"/>
    <property type="project" value="UniProtKB"/>
</dbReference>
<dbReference type="GO" id="GO:0042803">
    <property type="term" value="F:protein homodimerization activity"/>
    <property type="evidence" value="ECO:0000250"/>
    <property type="project" value="UniProtKB"/>
</dbReference>
<dbReference type="GO" id="GO:0050786">
    <property type="term" value="F:RAGE receptor binding"/>
    <property type="evidence" value="ECO:0000318"/>
    <property type="project" value="GO_Central"/>
</dbReference>
<dbReference type="GO" id="GO:0044548">
    <property type="term" value="F:S100 protein binding"/>
    <property type="evidence" value="ECO:0000250"/>
    <property type="project" value="UniProtKB"/>
</dbReference>
<dbReference type="GO" id="GO:0048156">
    <property type="term" value="F:tau protein binding"/>
    <property type="evidence" value="ECO:0000353"/>
    <property type="project" value="UniProtKB"/>
</dbReference>
<dbReference type="GO" id="GO:0008270">
    <property type="term" value="F:zinc ion binding"/>
    <property type="evidence" value="ECO:0000314"/>
    <property type="project" value="UniProtKB"/>
</dbReference>
<dbReference type="GO" id="GO:1990845">
    <property type="term" value="P:adaptive thermogenesis"/>
    <property type="evidence" value="ECO:0000250"/>
    <property type="project" value="UniProtKB"/>
</dbReference>
<dbReference type="GO" id="GO:0048143">
    <property type="term" value="P:astrocyte activation"/>
    <property type="evidence" value="ECO:0000303"/>
    <property type="project" value="UniProtKB"/>
</dbReference>
<dbReference type="GO" id="GO:0007409">
    <property type="term" value="P:axonogenesis"/>
    <property type="evidence" value="ECO:0000303"/>
    <property type="project" value="UniProtKB"/>
</dbReference>
<dbReference type="GO" id="GO:0007155">
    <property type="term" value="P:cell adhesion"/>
    <property type="evidence" value="ECO:0007669"/>
    <property type="project" value="UniProtKB-KW"/>
</dbReference>
<dbReference type="GO" id="GO:0007611">
    <property type="term" value="P:learning or memory"/>
    <property type="evidence" value="ECO:0000250"/>
    <property type="project" value="UniProtKB"/>
</dbReference>
<dbReference type="GO" id="GO:0007613">
    <property type="term" value="P:memory"/>
    <property type="evidence" value="ECO:0007669"/>
    <property type="project" value="Ensembl"/>
</dbReference>
<dbReference type="GO" id="GO:0071638">
    <property type="term" value="P:negative regulation of monocyte chemotactic protein-1 production"/>
    <property type="evidence" value="ECO:0000316"/>
    <property type="project" value="GO_Central"/>
</dbReference>
<dbReference type="GO" id="GO:0016310">
    <property type="term" value="P:phosphorylation"/>
    <property type="evidence" value="ECO:0000303"/>
    <property type="project" value="UniProtKB"/>
</dbReference>
<dbReference type="GO" id="GO:0043123">
    <property type="term" value="P:positive regulation of canonical NF-kappaB signal transduction"/>
    <property type="evidence" value="ECO:0000318"/>
    <property type="project" value="GO_Central"/>
</dbReference>
<dbReference type="GO" id="GO:0008284">
    <property type="term" value="P:positive regulation of cell population proliferation"/>
    <property type="evidence" value="ECO:0000318"/>
    <property type="project" value="GO_Central"/>
</dbReference>
<dbReference type="GO" id="GO:0045917">
    <property type="term" value="P:positive regulation of complement activation"/>
    <property type="evidence" value="ECO:0000303"/>
    <property type="project" value="UniProtKB"/>
</dbReference>
<dbReference type="GO" id="GO:0045666">
    <property type="term" value="P:positive regulation of neuron differentiation"/>
    <property type="evidence" value="ECO:0007669"/>
    <property type="project" value="Ensembl"/>
</dbReference>
<dbReference type="GO" id="GO:0048168">
    <property type="term" value="P:regulation of neuronal synaptic plasticity"/>
    <property type="evidence" value="ECO:0007669"/>
    <property type="project" value="Ensembl"/>
</dbReference>
<dbReference type="GO" id="GO:0006417">
    <property type="term" value="P:regulation of translation"/>
    <property type="evidence" value="ECO:0000303"/>
    <property type="project" value="UniProtKB"/>
</dbReference>
<dbReference type="GO" id="GO:0097490">
    <property type="term" value="P:sympathetic neuron projection extension"/>
    <property type="evidence" value="ECO:0000250"/>
    <property type="project" value="UniProtKB"/>
</dbReference>
<dbReference type="CDD" id="cd05027">
    <property type="entry name" value="S-100B"/>
    <property type="match status" value="1"/>
</dbReference>
<dbReference type="FunFam" id="1.10.238.10:FF:000044">
    <property type="entry name" value="Protein S100"/>
    <property type="match status" value="1"/>
</dbReference>
<dbReference type="Gene3D" id="1.10.238.10">
    <property type="entry name" value="EF-hand"/>
    <property type="match status" value="1"/>
</dbReference>
<dbReference type="IDEAL" id="IID50022"/>
<dbReference type="InterPro" id="IPR011992">
    <property type="entry name" value="EF-hand-dom_pair"/>
</dbReference>
<dbReference type="InterPro" id="IPR018247">
    <property type="entry name" value="EF_Hand_1_Ca_BS"/>
</dbReference>
<dbReference type="InterPro" id="IPR002048">
    <property type="entry name" value="EF_hand_dom"/>
</dbReference>
<dbReference type="InterPro" id="IPR028481">
    <property type="entry name" value="S100-B"/>
</dbReference>
<dbReference type="InterPro" id="IPR001751">
    <property type="entry name" value="S100/CaBP7/8-like_CS"/>
</dbReference>
<dbReference type="InterPro" id="IPR013787">
    <property type="entry name" value="S100_Ca-bd_sub"/>
</dbReference>
<dbReference type="PANTHER" id="PTHR11639:SF134">
    <property type="entry name" value="PROTEIN S100-A1-RELATED"/>
    <property type="match status" value="1"/>
</dbReference>
<dbReference type="PANTHER" id="PTHR11639">
    <property type="entry name" value="S100 CALCIUM-BINDING PROTEIN"/>
    <property type="match status" value="1"/>
</dbReference>
<dbReference type="Pfam" id="PF00036">
    <property type="entry name" value="EF-hand_1"/>
    <property type="match status" value="1"/>
</dbReference>
<dbReference type="Pfam" id="PF01023">
    <property type="entry name" value="S_100"/>
    <property type="match status" value="1"/>
</dbReference>
<dbReference type="SMART" id="SM00054">
    <property type="entry name" value="EFh"/>
    <property type="match status" value="1"/>
</dbReference>
<dbReference type="SMART" id="SM01394">
    <property type="entry name" value="S_100"/>
    <property type="match status" value="1"/>
</dbReference>
<dbReference type="SUPFAM" id="SSF47473">
    <property type="entry name" value="EF-hand"/>
    <property type="match status" value="1"/>
</dbReference>
<dbReference type="PROSITE" id="PS00018">
    <property type="entry name" value="EF_HAND_1"/>
    <property type="match status" value="1"/>
</dbReference>
<dbReference type="PROSITE" id="PS50222">
    <property type="entry name" value="EF_HAND_2"/>
    <property type="match status" value="1"/>
</dbReference>
<dbReference type="PROSITE" id="PS00303">
    <property type="entry name" value="S100_CABP"/>
    <property type="match status" value="1"/>
</dbReference>
<organism>
    <name type="scientific">Bos taurus</name>
    <name type="common">Bovine</name>
    <dbReference type="NCBI Taxonomy" id="9913"/>
    <lineage>
        <taxon>Eukaryota</taxon>
        <taxon>Metazoa</taxon>
        <taxon>Chordata</taxon>
        <taxon>Craniata</taxon>
        <taxon>Vertebrata</taxon>
        <taxon>Euteleostomi</taxon>
        <taxon>Mammalia</taxon>
        <taxon>Eutheria</taxon>
        <taxon>Laurasiatheria</taxon>
        <taxon>Artiodactyla</taxon>
        <taxon>Ruminantia</taxon>
        <taxon>Pecora</taxon>
        <taxon>Bovidae</taxon>
        <taxon>Bovinae</taxon>
        <taxon>Bos</taxon>
    </lineage>
</organism>
<evidence type="ECO:0000250" key="1">
    <source>
        <dbReference type="UniProtKB" id="P04271"/>
    </source>
</evidence>
<evidence type="ECO:0000250" key="2">
    <source>
        <dbReference type="UniProtKB" id="P04631"/>
    </source>
</evidence>
<evidence type="ECO:0000250" key="3">
    <source>
        <dbReference type="UniProtKB" id="P50114"/>
    </source>
</evidence>
<evidence type="ECO:0000255" key="4">
    <source>
        <dbReference type="PROSITE-ProRule" id="PRU00448"/>
    </source>
</evidence>
<evidence type="ECO:0000269" key="5">
    <source>
    </source>
</evidence>
<evidence type="ECO:0000269" key="6">
    <source>
    </source>
</evidence>
<evidence type="ECO:0000269" key="7">
    <source>
    </source>
</evidence>
<evidence type="ECO:0000269" key="8">
    <source>
    </source>
</evidence>
<evidence type="ECO:0000269" key="9">
    <source>
    </source>
</evidence>
<evidence type="ECO:0000305" key="10"/>
<evidence type="ECO:0007829" key="11">
    <source>
        <dbReference type="PDB" id="1CFP"/>
    </source>
</evidence>
<evidence type="ECO:0007829" key="12">
    <source>
        <dbReference type="PDB" id="1PSB"/>
    </source>
</evidence>
<evidence type="ECO:0007829" key="13">
    <source>
        <dbReference type="PDB" id="4PE0"/>
    </source>
</evidence>
<reference key="1">
    <citation type="submission" date="2005-09" db="EMBL/GenBank/DDBJ databases">
        <title>Cloning, molecular and biochemical characterization of S100B from bovine retina.</title>
        <authorList>
            <person name="Burczynska B.B."/>
            <person name="Duda T."/>
            <person name="Venkataraman V."/>
            <person name="Sharma R.K."/>
        </authorList>
    </citation>
    <scope>NUCLEOTIDE SEQUENCE [MRNA]</scope>
    <source>
        <tissue>Retina</tissue>
    </source>
</reference>
<reference key="2">
    <citation type="submission" date="2007-03" db="EMBL/GenBank/DDBJ databases">
        <authorList>
            <consortium name="NIH - Mammalian Gene Collection (MGC) project"/>
        </authorList>
    </citation>
    <scope>NUCLEOTIDE SEQUENCE [LARGE SCALE MRNA]</scope>
    <source>
        <strain>Hereford</strain>
        <tissue>Fetal pons</tissue>
        <tissue>Hypothalamus</tissue>
    </source>
</reference>
<reference key="3">
    <citation type="journal article" date="1978" name="Eur. J. Biochem.">
        <title>The amino-acid sequence of S-100 protein (PAP I-b protein) and its relation to the calcium-binding proteins.</title>
        <authorList>
            <person name="Isobe T."/>
            <person name="Okuyama T."/>
        </authorList>
    </citation>
    <scope>PROTEIN SEQUENCE OF 2-92</scope>
</reference>
<reference key="4">
    <citation type="journal article" date="1981" name="Eur. J. Biochem.">
        <title>The amino-acid sequence of the alpha subunit in bovine brain S-100a protein.</title>
        <authorList>
            <person name="Isobe T."/>
            <person name="Okuyama T."/>
        </authorList>
    </citation>
    <scope>SEQUENCE REVISION TO 1-5</scope>
</reference>
<reference key="5">
    <citation type="journal article" date="1985" name="Arch. Biochem. Biophys.">
        <title>Structural characterization of the calcium binding protein s100 from adipose tissue.</title>
        <authorList>
            <person name="Marshak D.R."/>
            <person name="Umekawa H."/>
            <person name="Watterson D.M."/>
            <person name="Hidaka H."/>
        </authorList>
    </citation>
    <scope>PROTEIN SEQUENCE OF 2-92</scope>
    <scope>ACETYLATION AT SER-2</scope>
</reference>
<reference key="6">
    <citation type="journal article" date="1983" name="Biochemistry">
        <title>Ions binding to S100 proteins: structural changes induced by calcium and zinc on S100a and S100b proteins.</title>
        <authorList>
            <person name="Baudier J."/>
            <person name="Gerard D."/>
        </authorList>
    </citation>
    <scope>FUNCTION</scope>
    <scope>METAL ION-BINDING PROPERTIES</scope>
</reference>
<reference key="7">
    <citation type="journal article" date="1986" name="J. Biol. Chem.">
        <title>Ions binding to S100 proteins. I. Calcium- and zinc-binding properties of bovine brain S100 alpha alpha, S100a (alpha beta), and S100b (beta beta) protein: Zn2+ regulates Ca2+ binding on S100b protein.</title>
        <authorList>
            <person name="Baudier J."/>
            <person name="Glasser N."/>
            <person name="Gerard D."/>
        </authorList>
    </citation>
    <scope>FUNCTION</scope>
    <scope>METAL ION-BINDING PROPERTIES</scope>
</reference>
<reference key="8">
    <citation type="journal article" date="1991" name="Biochem. J.">
        <title>Spectral studies on the cadmium-ion-binding properties of bovine brain S-100b protein.</title>
        <authorList>
            <person name="Donato H. Jr."/>
            <person name="Mani R.S."/>
            <person name="Kay C.M."/>
        </authorList>
    </citation>
    <scope>CADMIUM-BINDING STUDIES</scope>
</reference>
<reference key="9">
    <citation type="journal article" date="1996" name="Structure">
        <title>The solution structure of the bovine S100B protein dimer in the calcium-free state.</title>
        <authorList>
            <person name="Kilby P.M."/>
            <person name="van Eldik L.J."/>
            <person name="Roberts G.C.K."/>
        </authorList>
    </citation>
    <scope>STRUCTURE BY NMR</scope>
</reference>
<reference key="10">
    <citation type="journal article" date="2003" name="Biochemistry">
        <title>Structure of the Ca2+/S100B/NDR kinase peptide complex: insights into S100 target specificity and activation of the kinase.</title>
        <authorList>
            <person name="Bhattacharya S."/>
            <person name="Large E."/>
            <person name="Heizmann C.W."/>
            <person name="Hemmings B.A."/>
            <person name="Chazin W.J."/>
        </authorList>
    </citation>
    <scope>STRUCTURE BY NMR</scope>
    <scope>FUNCTION</scope>
    <scope>INTERACTION WITH STK38</scope>
</reference>
<name>S100B_BOVIN</name>
<gene>
    <name type="primary">S100B</name>
</gene>
<accession>P02638</accession>
<accession>A4IFR6</accession>
<accession>Q3ZBY1</accession>
<feature type="initiator methionine" description="Removed" evidence="7 9">
    <location>
        <position position="1"/>
    </location>
</feature>
<feature type="chain" id="PRO_0000143965" description="Protein S100-B">
    <location>
        <begin position="2"/>
        <end position="92"/>
    </location>
</feature>
<feature type="domain" description="EF-hand 1" evidence="10">
    <location>
        <begin position="13"/>
        <end position="48"/>
    </location>
</feature>
<feature type="domain" description="EF-hand 2" evidence="4">
    <location>
        <begin position="49"/>
        <end position="84"/>
    </location>
</feature>
<feature type="binding site" evidence="1">
    <location>
        <position position="16"/>
    </location>
    <ligand>
        <name>Zn(2+)</name>
        <dbReference type="ChEBI" id="CHEBI:29105"/>
    </ligand>
</feature>
<feature type="binding site" evidence="1">
    <location>
        <position position="19"/>
    </location>
    <ligand>
        <name>Ca(2+)</name>
        <dbReference type="ChEBI" id="CHEBI:29108"/>
        <label>1</label>
        <note>low affinity</note>
    </ligand>
</feature>
<feature type="binding site" evidence="1">
    <location>
        <position position="22"/>
    </location>
    <ligand>
        <name>Ca(2+)</name>
        <dbReference type="ChEBI" id="CHEBI:29108"/>
        <label>1</label>
        <note>low affinity</note>
    </ligand>
</feature>
<feature type="binding site" evidence="1">
    <location>
        <position position="24"/>
    </location>
    <ligand>
        <name>Ca(2+)</name>
        <dbReference type="ChEBI" id="CHEBI:29108"/>
        <label>1</label>
        <note>low affinity</note>
    </ligand>
</feature>
<feature type="binding site" evidence="1">
    <location>
        <position position="26"/>
    </location>
    <ligand>
        <name>Zn(2+)</name>
        <dbReference type="ChEBI" id="CHEBI:29105"/>
    </ligand>
</feature>
<feature type="binding site" evidence="4">
    <location>
        <position position="62"/>
    </location>
    <ligand>
        <name>Ca(2+)</name>
        <dbReference type="ChEBI" id="CHEBI:29108"/>
        <label>2</label>
        <note>high affinity</note>
    </ligand>
</feature>
<feature type="binding site" evidence="4">
    <location>
        <position position="64"/>
    </location>
    <ligand>
        <name>Ca(2+)</name>
        <dbReference type="ChEBI" id="CHEBI:29108"/>
        <label>2</label>
        <note>high affinity</note>
    </ligand>
</feature>
<feature type="binding site" evidence="4">
    <location>
        <position position="66"/>
    </location>
    <ligand>
        <name>Ca(2+)</name>
        <dbReference type="ChEBI" id="CHEBI:29108"/>
        <label>2</label>
        <note>high affinity</note>
    </ligand>
</feature>
<feature type="binding site" evidence="4">
    <location>
        <position position="68"/>
    </location>
    <ligand>
        <name>Ca(2+)</name>
        <dbReference type="ChEBI" id="CHEBI:29108"/>
        <label>2</label>
        <note>high affinity</note>
    </ligand>
</feature>
<feature type="binding site" evidence="4">
    <location>
        <position position="73"/>
    </location>
    <ligand>
        <name>Ca(2+)</name>
        <dbReference type="ChEBI" id="CHEBI:29108"/>
        <label>2</label>
        <note>high affinity</note>
    </ligand>
</feature>
<feature type="binding site" evidence="1">
    <location>
        <position position="86"/>
    </location>
    <ligand>
        <name>Zn(2+)</name>
        <dbReference type="ChEBI" id="CHEBI:29105"/>
    </ligand>
</feature>
<feature type="binding site" evidence="1">
    <location>
        <position position="91"/>
    </location>
    <ligand>
        <name>Zn(2+)</name>
        <dbReference type="ChEBI" id="CHEBI:29105"/>
    </ligand>
</feature>
<feature type="modified residue" description="N-acetylserine" evidence="7">
    <location>
        <position position="2"/>
    </location>
</feature>
<feature type="helix" evidence="13">
    <location>
        <begin position="3"/>
        <end position="19"/>
    </location>
</feature>
<feature type="strand" evidence="13">
    <location>
        <begin position="21"/>
        <end position="24"/>
    </location>
</feature>
<feature type="strand" evidence="12">
    <location>
        <begin position="25"/>
        <end position="29"/>
    </location>
</feature>
<feature type="helix" evidence="13">
    <location>
        <begin position="30"/>
        <end position="40"/>
    </location>
</feature>
<feature type="turn" evidence="13">
    <location>
        <begin position="42"/>
        <end position="44"/>
    </location>
</feature>
<feature type="helix" evidence="11">
    <location>
        <begin position="48"/>
        <end position="50"/>
    </location>
</feature>
<feature type="helix" evidence="13">
    <location>
        <begin position="51"/>
        <end position="61"/>
    </location>
</feature>
<feature type="strand" evidence="13">
    <location>
        <begin position="66"/>
        <end position="69"/>
    </location>
</feature>
<feature type="helix" evidence="13">
    <location>
        <begin position="71"/>
        <end position="88"/>
    </location>
</feature>